<feature type="signal peptide" evidence="2">
    <location>
        <begin position="1"/>
        <end position="18"/>
    </location>
</feature>
<feature type="chain" id="PRO_0000017905" description="Beta-lactoglobulin">
    <location>
        <begin position="19"/>
        <end position="180"/>
    </location>
</feature>
<feature type="disulfide bond">
    <location>
        <begin position="84"/>
        <end position="178"/>
    </location>
</feature>
<feature type="disulfide bond" description="Alternate">
    <location>
        <begin position="124"/>
        <end position="139"/>
    </location>
</feature>
<feature type="disulfide bond">
    <location>
        <begin position="124"/>
        <end position="137"/>
    </location>
</feature>
<feature type="helix" evidence="4">
    <location>
        <begin position="23"/>
        <end position="26"/>
    </location>
</feature>
<feature type="helix" evidence="5">
    <location>
        <begin position="30"/>
        <end position="33"/>
    </location>
</feature>
<feature type="strand" evidence="5">
    <location>
        <begin position="38"/>
        <end position="46"/>
    </location>
</feature>
<feature type="helix" evidence="5">
    <location>
        <begin position="47"/>
        <end position="49"/>
    </location>
</feature>
<feature type="strand" evidence="5">
    <location>
        <begin position="59"/>
        <end position="66"/>
    </location>
</feature>
<feature type="strand" evidence="5">
    <location>
        <begin position="72"/>
        <end position="80"/>
    </location>
</feature>
<feature type="strand" evidence="5">
    <location>
        <begin position="83"/>
        <end position="93"/>
    </location>
</feature>
<feature type="strand" evidence="5">
    <location>
        <begin position="99"/>
        <end position="104"/>
    </location>
</feature>
<feature type="strand" evidence="5">
    <location>
        <begin position="107"/>
        <end position="115"/>
    </location>
</feature>
<feature type="strand" evidence="5">
    <location>
        <begin position="117"/>
        <end position="126"/>
    </location>
</feature>
<feature type="strand" evidence="6">
    <location>
        <begin position="128"/>
        <end position="130"/>
    </location>
</feature>
<feature type="helix" evidence="5">
    <location>
        <begin position="131"/>
        <end position="134"/>
    </location>
</feature>
<feature type="strand" evidence="5">
    <location>
        <begin position="136"/>
        <end position="145"/>
    </location>
</feature>
<feature type="helix" evidence="5">
    <location>
        <begin position="148"/>
        <end position="157"/>
    </location>
</feature>
<feature type="turn" evidence="5">
    <location>
        <begin position="158"/>
        <end position="160"/>
    </location>
</feature>
<feature type="strand" evidence="5">
    <location>
        <begin position="165"/>
        <end position="168"/>
    </location>
</feature>
<feature type="helix" evidence="5">
    <location>
        <begin position="171"/>
        <end position="175"/>
    </location>
</feature>
<feature type="helix" evidence="5">
    <location>
        <begin position="177"/>
        <end position="179"/>
    </location>
</feature>
<name>LACB_CAPHI</name>
<evidence type="ECO:0000250" key="1">
    <source>
        <dbReference type="UniProtKB" id="P02754"/>
    </source>
</evidence>
<evidence type="ECO:0000269" key="2">
    <source>
    </source>
</evidence>
<evidence type="ECO:0000305" key="3"/>
<evidence type="ECO:0007829" key="4">
    <source>
        <dbReference type="PDB" id="4OMW"/>
    </source>
</evidence>
<evidence type="ECO:0007829" key="5">
    <source>
        <dbReference type="PDB" id="4TLJ"/>
    </source>
</evidence>
<evidence type="ECO:0007829" key="6">
    <source>
        <dbReference type="PDB" id="7LWC"/>
    </source>
</evidence>
<sequence length="180" mass="19976">MKCLLLALGLALACGIQAIIVTQTMKGLDIQKVAGTWYSLAMAASDISLLDAQSAPLRVYVEELKPTPEGNLEILLQKWENGECAQKKIIAEKTKIPAVFKIDALNENKVLVLDTDYKKYLLFCMENSAEPEQSLACQCLVRTPEVDKEALEKFDKALKALPMHIRLAFNPTQLEGQCHV</sequence>
<proteinExistence type="evidence at protein level"/>
<organism>
    <name type="scientific">Capra hircus</name>
    <name type="common">Goat</name>
    <dbReference type="NCBI Taxonomy" id="9925"/>
    <lineage>
        <taxon>Eukaryota</taxon>
        <taxon>Metazoa</taxon>
        <taxon>Chordata</taxon>
        <taxon>Craniata</taxon>
        <taxon>Vertebrata</taxon>
        <taxon>Euteleostomi</taxon>
        <taxon>Mammalia</taxon>
        <taxon>Eutheria</taxon>
        <taxon>Laurasiatheria</taxon>
        <taxon>Artiodactyla</taxon>
        <taxon>Ruminantia</taxon>
        <taxon>Pecora</taxon>
        <taxon>Bovidae</taxon>
        <taxon>Caprinae</taxon>
        <taxon>Capra</taxon>
    </lineage>
</organism>
<keyword id="KW-0002">3D-structure</keyword>
<keyword id="KW-0903">Direct protein sequencing</keyword>
<keyword id="KW-1015">Disulfide bond</keyword>
<keyword id="KW-0494">Milk protein</keyword>
<keyword id="KW-1185">Reference proteome</keyword>
<keyword id="KW-0683">Retinol-binding</keyword>
<keyword id="KW-0964">Secreted</keyword>
<keyword id="KW-0732">Signal</keyword>
<keyword id="KW-0813">Transport</keyword>
<dbReference type="EMBL" id="X58471">
    <property type="protein sequence ID" value="CAA41385.1"/>
    <property type="molecule type" value="mRNA"/>
</dbReference>
<dbReference type="EMBL" id="Z19569">
    <property type="protein sequence ID" value="CAA79623.1"/>
    <property type="molecule type" value="mRNA"/>
</dbReference>
<dbReference type="EMBL" id="Z19570">
    <property type="protein sequence ID" value="CAA79624.1"/>
    <property type="molecule type" value="Genomic_DNA"/>
</dbReference>
<dbReference type="EMBL" id="Z33881">
    <property type="protein sequence ID" value="CAA83946.1"/>
    <property type="molecule type" value="Genomic_DNA"/>
</dbReference>
<dbReference type="PIR" id="A03220">
    <property type="entry name" value="LGGT"/>
</dbReference>
<dbReference type="RefSeq" id="NP_001272468.1">
    <property type="nucleotide sequence ID" value="NM_001285539.1"/>
</dbReference>
<dbReference type="RefSeq" id="XP_017910176.1">
    <property type="nucleotide sequence ID" value="XM_018054687.1"/>
</dbReference>
<dbReference type="RefSeq" id="XP_017910177.1">
    <property type="nucleotide sequence ID" value="XM_018054688.1"/>
</dbReference>
<dbReference type="RefSeq" id="XP_017910178.1">
    <property type="nucleotide sequence ID" value="XM_018054689.1"/>
</dbReference>
<dbReference type="PDB" id="4OMW">
    <property type="method" value="X-ray"/>
    <property type="resolution" value="2.30 A"/>
    <property type="chains" value="A/B/C/D=19-180"/>
</dbReference>
<dbReference type="PDB" id="4OMX">
    <property type="method" value="X-ray"/>
    <property type="resolution" value="2.30 A"/>
    <property type="chains" value="A=19-180"/>
</dbReference>
<dbReference type="PDB" id="4TLJ">
    <property type="method" value="X-ray"/>
    <property type="resolution" value="1.17 A"/>
    <property type="chains" value="A/B=19-180"/>
</dbReference>
<dbReference type="PDB" id="4Y0S">
    <property type="method" value="X-ray"/>
    <property type="resolution" value="1.90 A"/>
    <property type="chains" value="A=19-180"/>
</dbReference>
<dbReference type="PDB" id="7LWC">
    <property type="method" value="X-ray"/>
    <property type="resolution" value="3.00 A"/>
    <property type="chains" value="A/B=19-180"/>
</dbReference>
<dbReference type="PDBsum" id="4OMW"/>
<dbReference type="PDBsum" id="4OMX"/>
<dbReference type="PDBsum" id="4TLJ"/>
<dbReference type="PDBsum" id="4Y0S"/>
<dbReference type="PDBsum" id="7LWC"/>
<dbReference type="SMR" id="P02756"/>
<dbReference type="MINT" id="P02756"/>
<dbReference type="STRING" id="9925.ENSCHIP00000012525"/>
<dbReference type="Allergome" id="1256">
    <property type="allergen name" value="Cap h 5"/>
</dbReference>
<dbReference type="Ensembl" id="ENSCHIT00010022089.1">
    <property type="protein sequence ID" value="ENSCHIP00010015740.1"/>
    <property type="gene ID" value="ENSCHIG00010011456.1"/>
</dbReference>
<dbReference type="Ensembl" id="ENSCHIT00020032055">
    <property type="protein sequence ID" value="ENSCHIP00020023858"/>
    <property type="gene ID" value="ENSCHIG00020015397"/>
</dbReference>
<dbReference type="Ensembl" id="ENSCHIT00040013423">
    <property type="protein sequence ID" value="ENSCHIP00040010530"/>
    <property type="gene ID" value="ENSCHIG00040006183"/>
</dbReference>
<dbReference type="GeneID" id="100861187"/>
<dbReference type="KEGG" id="chx:100861187"/>
<dbReference type="CTD" id="5047"/>
<dbReference type="OrthoDB" id="9835883at2759"/>
<dbReference type="EvolutionaryTrace" id="P02756"/>
<dbReference type="Proteomes" id="UP000291000">
    <property type="component" value="Unplaced"/>
</dbReference>
<dbReference type="Proteomes" id="UP000694566">
    <property type="component" value="Chromosome 11"/>
</dbReference>
<dbReference type="GO" id="GO:0005576">
    <property type="term" value="C:extracellular region"/>
    <property type="evidence" value="ECO:0007669"/>
    <property type="project" value="UniProtKB-SubCell"/>
</dbReference>
<dbReference type="GO" id="GO:0042802">
    <property type="term" value="F:identical protein binding"/>
    <property type="evidence" value="ECO:0000353"/>
    <property type="project" value="IntAct"/>
</dbReference>
<dbReference type="GO" id="GO:0019841">
    <property type="term" value="F:retinol binding"/>
    <property type="evidence" value="ECO:0007669"/>
    <property type="project" value="UniProtKB-KW"/>
</dbReference>
<dbReference type="CDD" id="cd19416">
    <property type="entry name" value="lipocalin_beta-LG-like"/>
    <property type="match status" value="1"/>
</dbReference>
<dbReference type="FunFam" id="2.40.128.20:FF:000029">
    <property type="entry name" value="Beta-lactoglobulin"/>
    <property type="match status" value="1"/>
</dbReference>
<dbReference type="Gene3D" id="2.40.128.20">
    <property type="match status" value="1"/>
</dbReference>
<dbReference type="InterPro" id="IPR002447">
    <property type="entry name" value="Blactoglobulin"/>
</dbReference>
<dbReference type="InterPro" id="IPR012674">
    <property type="entry name" value="Calycin"/>
</dbReference>
<dbReference type="InterPro" id="IPR002345">
    <property type="entry name" value="Lipocalin"/>
</dbReference>
<dbReference type="InterPro" id="IPR022272">
    <property type="entry name" value="Lipocalin_CS"/>
</dbReference>
<dbReference type="InterPro" id="IPR000566">
    <property type="entry name" value="Lipocln_cytosolic_FA-bd_dom"/>
</dbReference>
<dbReference type="PANTHER" id="PTHR11430:SF117">
    <property type="entry name" value="GLYCODELIN"/>
    <property type="match status" value="1"/>
</dbReference>
<dbReference type="PANTHER" id="PTHR11430">
    <property type="entry name" value="LIPOCALIN"/>
    <property type="match status" value="1"/>
</dbReference>
<dbReference type="Pfam" id="PF00061">
    <property type="entry name" value="Lipocalin"/>
    <property type="match status" value="1"/>
</dbReference>
<dbReference type="PRINTS" id="PR01172">
    <property type="entry name" value="BLCTOGLOBULN"/>
</dbReference>
<dbReference type="PRINTS" id="PR00179">
    <property type="entry name" value="LIPOCALIN"/>
</dbReference>
<dbReference type="SUPFAM" id="SSF50814">
    <property type="entry name" value="Lipocalins"/>
    <property type="match status" value="1"/>
</dbReference>
<dbReference type="PROSITE" id="PS00213">
    <property type="entry name" value="LIPOCALIN"/>
    <property type="match status" value="1"/>
</dbReference>
<protein>
    <recommendedName>
        <fullName>Beta-lactoglobulin</fullName>
        <shortName>Beta-LG</shortName>
    </recommendedName>
</protein>
<gene>
    <name type="primary">LGB</name>
</gene>
<reference key="1">
    <citation type="journal article" date="1993" name="J. Anim. Sci.">
        <title>Cloning and sequencing of the cDNA encoding goat beta-lactoglobulin.</title>
        <authorList>
            <person name="Folch J.M."/>
            <person name="Coll A."/>
            <person name="Sanchez A."/>
        </authorList>
    </citation>
    <scope>NUCLEOTIDE SEQUENCE [MRNA]</scope>
    <source>
        <strain>Ssp. aegagrus</strain>
        <tissue>Mammary gland</tissue>
    </source>
</reference>
<reference key="2">
    <citation type="submission" date="1993-01" db="EMBL/GenBank/DDBJ databases">
        <authorList>
            <person name="Kim J."/>
            <person name="Kim A."/>
            <person name="Kim J."/>
            <person name="Yu M."/>
        </authorList>
    </citation>
    <scope>NUCLEOTIDE SEQUENCE</scope>
</reference>
<reference key="3">
    <citation type="journal article" date="1994" name="J. Dairy Sci.">
        <title>Complete sequence of the caprine beta-lactoglobulin gene.</title>
        <authorList>
            <person name="Folch J."/>
            <person name="Coll A."/>
            <person name="Sanchez A."/>
        </authorList>
    </citation>
    <scope>NUCLEOTIDE SEQUENCE [GENOMIC DNA]</scope>
    <source>
        <tissue>Liver</tissue>
    </source>
</reference>
<reference key="4">
    <citation type="journal article" date="1979" name="Hoppe-Seyler's Z. Physiol. Chem.">
        <title>The amino acid sequence of goat beta-lactoglobulin.</title>
        <authorList>
            <person name="Preaux G."/>
            <person name="Braunitzer G."/>
            <person name="Schrank B."/>
            <person name="Stangl A."/>
        </authorList>
    </citation>
    <scope>PROTEIN SEQUENCE OF 19-180</scope>
</reference>
<accession>P02756</accession>
<comment type="function">
    <text>Primary component of whey, it binds retinol and is probably involved in the transport of that molecule.</text>
</comment>
<comment type="subunit">
    <text evidence="1">Under physiological conditions beta-lactoglobulin exists as an equilibrium mixture of monomeric and dimeric forms (By similarity). Interaction with LMBR1L is controversial (By similarity).</text>
</comment>
<comment type="interaction">
    <interactant intactId="EBI-9697367">
        <id>P02756</id>
    </interactant>
    <interactant intactId="EBI-9697367">
        <id>P02756</id>
        <label>LGB</label>
    </interactant>
    <organismsDiffer>false</organismsDiffer>
    <experiments>3</experiments>
</comment>
<comment type="subcellular location">
    <subcellularLocation>
        <location>Secreted</location>
    </subcellularLocation>
</comment>
<comment type="tissue specificity">
    <text>Synthesized in mammary gland and secreted in milk.</text>
</comment>
<comment type="PTM">
    <text>Alternate disulfide bonds occur in equal amounts.</text>
</comment>
<comment type="similarity">
    <text evidence="3">Belongs to the calycin superfamily. Lipocalin family.</text>
</comment>